<name>MNCO_MICNN</name>
<reference key="1">
    <citation type="journal article" date="2001" name="Eur. J. Biochem.">
        <title>A novel carbohydrate:acceptor oxidoreductase from Microdochium nivale.</title>
        <authorList>
            <person name="Xu F."/>
            <person name="Golightly E.J."/>
            <person name="Fuglsang C.C."/>
            <person name="Schneider P."/>
            <person name="Duke K.R."/>
            <person name="Lam L."/>
            <person name="Christensen S."/>
            <person name="Brown K.M."/>
            <person name="Joergensen C.T."/>
            <person name="Brown S.H."/>
        </authorList>
    </citation>
    <scope>NUCLEOTIDE SEQUENCE [GENOMIC DNA]</scope>
    <scope>PROTEIN SEQUENCE OF 23-46; 217-292; 325-344; 358-369; 404-435 AND 442-462</scope>
    <scope>FUNCTION</scope>
    <scope>CATALYTIC ACTIVITY</scope>
    <scope>BIOPHYSICOCHEMICAL PROPERTIES</scope>
    <scope>SUBCELLULAR LOCATION</scope>
    <source>
        <strain>NN008551</strain>
    </source>
</reference>
<reference key="2">
    <citation type="journal article" date="2001" name="J. Mol. Catal., B Enzym.">
        <title>Specificity and kinetic parameters of recombinant Microdochium nivale carbohydrate oxidase.</title>
        <authorList>
            <person name="Kulys J."/>
            <person name="Tetianec L."/>
            <person name="Schneider P."/>
        </authorList>
    </citation>
    <scope>FUNCTION</scope>
    <scope>CATALYTIC ACTIVITY</scope>
</reference>
<reference key="3">
    <citation type="journal article" date="2003" name="Biologija">
        <title>The specificity of recombinant Microdochium nivale carbohydrate oxidase.</title>
        <authorList>
            <person name="Tetianec L."/>
            <person name="Kulys J."/>
        </authorList>
    </citation>
    <scope>FUNCTION</scope>
    <scope>CATALYTIC ACTIVITY</scope>
    <scope>BIOPHYSICOCHEMICAL PROPERTIES</scope>
</reference>
<reference key="4">
    <citation type="journal article" date="2007" name="Biotechnol. Bioeng.">
        <title>Oxidation of lactose to lactobionic acid by a Microdochium nivale carbohydrate oxidase: kinetics and operational stability.</title>
        <authorList>
            <person name="Nordkvist M."/>
            <person name="Nielsen P.M."/>
            <person name="Villadsen J."/>
        </authorList>
    </citation>
    <scope>CATALYTIC ACTIVITY</scope>
    <scope>BIOPHYSICOCHEMICAL PROPERTIES</scope>
    <scope>COFACTOR</scope>
</reference>
<reference key="5">
    <citation type="journal article" date="2009" name="Acta Crystallogr. F">
        <title>Crystallization of carbohydrate oxidase from Microdochium nivale.</title>
        <authorList>
            <person name="Duskova J."/>
            <person name="Dohnalek J."/>
            <person name="Skalova T."/>
            <person name="Oestergaard L.H."/>
            <person name="Fuglsang C.C."/>
            <person name="Kolenko P."/>
            <person name="Stepankova A."/>
            <person name="Hasek J."/>
        </authorList>
    </citation>
    <scope>CRYSTALLIZATION</scope>
</reference>
<reference evidence="11 12" key="6">
    <citation type="submission" date="2011-04" db="PDB data bank">
        <title>Crystal structure and kinetic studies of carbohydrate oxidase from Microdochium nivale.</title>
        <authorList>
            <person name="Duskova J."/>
            <person name="Skalova T."/>
            <person name="Kolenko P."/>
            <person name="Stepankova A."/>
            <person name="Hasek J."/>
            <person name="Koval T."/>
            <person name="Ostergaard L.H."/>
            <person name="Fuglsang C.C."/>
            <person name="Dohnalek J."/>
        </authorList>
    </citation>
    <scope>X-RAY CRYSTALLOGRAPHY (2.10 ANGSTROMS) OF 23-495 IN COMPLEX WITH FAD</scope>
    <scope>GLYCOSYLATION AT ASN-244</scope>
</reference>
<gene>
    <name evidence="8" type="primary">MnCO</name>
</gene>
<evidence type="ECO:0000255" key="1">
    <source>
        <dbReference type="PROSITE-ProRule" id="PRU00498"/>
    </source>
</evidence>
<evidence type="ECO:0000255" key="2">
    <source>
        <dbReference type="PROSITE-ProRule" id="PRU00718"/>
    </source>
</evidence>
<evidence type="ECO:0000269" key="3">
    <source>
    </source>
</evidence>
<evidence type="ECO:0000269" key="4">
    <source>
    </source>
</evidence>
<evidence type="ECO:0000269" key="5">
    <source ref="2"/>
</evidence>
<evidence type="ECO:0000269" key="6">
    <source ref="3"/>
</evidence>
<evidence type="ECO:0000269" key="7">
    <source ref="6"/>
</evidence>
<evidence type="ECO:0000303" key="8">
    <source>
    </source>
</evidence>
<evidence type="ECO:0000303" key="9">
    <source>
    </source>
</evidence>
<evidence type="ECO:0000305" key="10"/>
<evidence type="ECO:0007744" key="11">
    <source>
        <dbReference type="PDB" id="3RJ8"/>
    </source>
</evidence>
<evidence type="ECO:0007744" key="12">
    <source>
        <dbReference type="PDB" id="3RJA"/>
    </source>
</evidence>
<evidence type="ECO:0007829" key="13">
    <source>
        <dbReference type="PDB" id="3RJA"/>
    </source>
</evidence>
<accession>I1SB12</accession>
<keyword id="KW-0002">3D-structure</keyword>
<keyword id="KW-0903">Direct protein sequencing</keyword>
<keyword id="KW-0274">FAD</keyword>
<keyword id="KW-0285">Flavoprotein</keyword>
<keyword id="KW-0325">Glycoprotein</keyword>
<keyword id="KW-0479">Metal-binding</keyword>
<keyword id="KW-0547">Nucleotide-binding</keyword>
<keyword id="KW-0560">Oxidoreductase</keyword>
<keyword id="KW-0964">Secreted</keyword>
<keyword id="KW-0732">Signal</keyword>
<keyword id="KW-0862">Zinc</keyword>
<dbReference type="EC" id="1.1.3.-"/>
<dbReference type="EC" id="1.1.3.5" evidence="3"/>
<dbReference type="PDB" id="3RJ8">
    <property type="method" value="X-ray"/>
    <property type="resolution" value="2.40 A"/>
    <property type="chains" value="A=23-495"/>
</dbReference>
<dbReference type="PDB" id="3RJA">
    <property type="method" value="X-ray"/>
    <property type="resolution" value="2.10 A"/>
    <property type="chains" value="A=23-495"/>
</dbReference>
<dbReference type="PDBsum" id="3RJ8"/>
<dbReference type="PDBsum" id="3RJA"/>
<dbReference type="SMR" id="I1SB12"/>
<dbReference type="GlyCosmos" id="I1SB12">
    <property type="glycosylation" value="2 sites, No reported glycans"/>
</dbReference>
<dbReference type="EvolutionaryTrace" id="I1SB12"/>
<dbReference type="GO" id="GO:0005576">
    <property type="term" value="C:extracellular region"/>
    <property type="evidence" value="ECO:0007669"/>
    <property type="project" value="UniProtKB-SubCell"/>
</dbReference>
<dbReference type="GO" id="GO:0046562">
    <property type="term" value="F:beta-D-glucose oxidase activity"/>
    <property type="evidence" value="ECO:0007669"/>
    <property type="project" value="RHEA"/>
</dbReference>
<dbReference type="GO" id="GO:0071949">
    <property type="term" value="F:FAD binding"/>
    <property type="evidence" value="ECO:0007669"/>
    <property type="project" value="InterPro"/>
</dbReference>
<dbReference type="GO" id="GO:0046872">
    <property type="term" value="F:metal ion binding"/>
    <property type="evidence" value="ECO:0007669"/>
    <property type="project" value="UniProtKB-KW"/>
</dbReference>
<dbReference type="Gene3D" id="3.30.465.10">
    <property type="match status" value="1"/>
</dbReference>
<dbReference type="Gene3D" id="3.40.462.20">
    <property type="match status" value="1"/>
</dbReference>
<dbReference type="InterPro" id="IPR012951">
    <property type="entry name" value="BBE"/>
</dbReference>
<dbReference type="InterPro" id="IPR016166">
    <property type="entry name" value="FAD-bd_PCMH"/>
</dbReference>
<dbReference type="InterPro" id="IPR036318">
    <property type="entry name" value="FAD-bd_PCMH-like_sf"/>
</dbReference>
<dbReference type="InterPro" id="IPR016169">
    <property type="entry name" value="FAD-bd_PCMH_sub2"/>
</dbReference>
<dbReference type="InterPro" id="IPR050416">
    <property type="entry name" value="FAD-linked_Oxidoreductase"/>
</dbReference>
<dbReference type="InterPro" id="IPR006094">
    <property type="entry name" value="Oxid_FAD_bind_N"/>
</dbReference>
<dbReference type="PANTHER" id="PTHR42973">
    <property type="entry name" value="BINDING OXIDOREDUCTASE, PUTATIVE (AFU_ORTHOLOGUE AFUA_1G17690)-RELATED"/>
    <property type="match status" value="1"/>
</dbReference>
<dbReference type="PANTHER" id="PTHR42973:SF39">
    <property type="entry name" value="FAD-BINDING PCMH-TYPE DOMAIN-CONTAINING PROTEIN"/>
    <property type="match status" value="1"/>
</dbReference>
<dbReference type="Pfam" id="PF08031">
    <property type="entry name" value="BBE"/>
    <property type="match status" value="1"/>
</dbReference>
<dbReference type="Pfam" id="PF01565">
    <property type="entry name" value="FAD_binding_4"/>
    <property type="match status" value="1"/>
</dbReference>
<dbReference type="SUPFAM" id="SSF56176">
    <property type="entry name" value="FAD-binding/transporter-associated domain-like"/>
    <property type="match status" value="1"/>
</dbReference>
<dbReference type="PROSITE" id="PS51387">
    <property type="entry name" value="FAD_PCMH"/>
    <property type="match status" value="1"/>
</dbReference>
<organism>
    <name type="scientific">Microdochium nivale</name>
    <name type="common">Pink snow mold</name>
    <name type="synonym">Lanosa nivalis</name>
    <dbReference type="NCBI Taxonomy" id="5520"/>
    <lineage>
        <taxon>Eukaryota</taxon>
        <taxon>Fungi</taxon>
        <taxon>Dikarya</taxon>
        <taxon>Ascomycota</taxon>
        <taxon>Pezizomycotina</taxon>
        <taxon>Sordariomycetes</taxon>
        <taxon>Xylariomycetidae</taxon>
        <taxon>Xylariales</taxon>
        <taxon>Microdochiaceae</taxon>
        <taxon>Microdochium</taxon>
    </lineage>
</organism>
<protein>
    <recommendedName>
        <fullName evidence="8">Carbohydrate oxidase</fullName>
        <ecNumber>1.1.3.-</ecNumber>
        <ecNumber evidence="3">1.1.3.5</ecNumber>
    </recommendedName>
    <alternativeName>
        <fullName evidence="9">Lactose oxidase</fullName>
        <shortName>LaO</shortName>
    </alternativeName>
</protein>
<proteinExistence type="evidence at protein level"/>
<sequence>MRSAFILALGLITASADALVTRGAIEACLSAAGVPIDIPGTADYERDVEPFNIRLPYIPTAIAQTQTTAHIQSAVQCAKKLNLKVSAKSGGHSYASFGFGGENGHLMVQLDRMIDVISYNDKTGIAHVEPGARLGHLATVLNDKYGRAISHGTCPGVGISGHFAHGGFGFSSHMHGLAVDSVVGVTVVLADGRIVEASATENADLFWGIKGAGSNFGIVAVWKLATFPAPKVLTRFGVTLNWKNKTSALKGIEAVEDYARWVAPREVNFRIGDYGAGNPGIEGLYYGTPEQWRAAFQPLLDTLPAGYVVNPTTSLNWIESVLSYSNFDHVDFITPQPVENFYAKSLTLKSIKGDAVKNFVDYYFDVSNKVKDRFWFYQLDVHGGKNSQVTKVTNAETAYPHRDKLWLIQFYDRYDNNQTYPETSFKFLDGWVNSVTKALPKSDWGMYINYADPRMDRDYATKVYYGENLARLQKLKAKFDPTDRFYYPQAVRPVK</sequence>
<comment type="function">
    <text evidence="3 5 6">Catalyzes the selective oxidation of C1 hydroxyl moieties on mono-, oligo- and polysaccharides with concomitant reduction of molecular oxygen to hydrogen peroxide. This results in the formation of the corresponding lactones, which typically undergo spontaneous hydrolysis. Carbohydrate oxidase is able to oxidize a variety of substrates including D-glucose, D-galactose, D-xylose, D-maltose, D-cellobiose, and lactose. In addition, among various oligosaccharides, the enzyme preferred tetrameric dextrins, indicating a favorable interaction of four linked glucose units with the substrate binding pocket.</text>
</comment>
<comment type="catalytic activity">
    <reaction evidence="3">
        <text>beta-D-glucose + O2 = D-glucono-1,5-lactone + H2O2</text>
        <dbReference type="Rhea" id="RHEA:11428"/>
        <dbReference type="ChEBI" id="CHEBI:15379"/>
        <dbReference type="ChEBI" id="CHEBI:15903"/>
        <dbReference type="ChEBI" id="CHEBI:16217"/>
        <dbReference type="ChEBI" id="CHEBI:16240"/>
        <dbReference type="EC" id="1.1.3.5"/>
    </reaction>
</comment>
<comment type="catalytic activity">
    <reaction evidence="3">
        <text>D-galactose + O2 = D-galactono-1,5-lactone + H2O2</text>
        <dbReference type="Rhea" id="RHEA:59312"/>
        <dbReference type="ChEBI" id="CHEBI:4139"/>
        <dbReference type="ChEBI" id="CHEBI:15379"/>
        <dbReference type="ChEBI" id="CHEBI:15945"/>
        <dbReference type="ChEBI" id="CHEBI:16240"/>
        <dbReference type="EC" id="1.1.3.5"/>
    </reaction>
</comment>
<comment type="catalytic activity">
    <reaction evidence="3 6">
        <text>D-cellobiose + O2 = D-cellobiono-1,5-lactone + H2O2</text>
        <dbReference type="Rhea" id="RHEA:59316"/>
        <dbReference type="ChEBI" id="CHEBI:15379"/>
        <dbReference type="ChEBI" id="CHEBI:16240"/>
        <dbReference type="ChEBI" id="CHEBI:17057"/>
        <dbReference type="ChEBI" id="CHEBI:17863"/>
        <dbReference type="EC" id="1.1.3.5"/>
    </reaction>
</comment>
<comment type="catalytic activity">
    <reaction evidence="3">
        <text>beta-lactose + O2 = lactobiono-1,5-lactone + H2O2</text>
        <dbReference type="Rhea" id="RHEA:59352"/>
        <dbReference type="ChEBI" id="CHEBI:15379"/>
        <dbReference type="ChEBI" id="CHEBI:16240"/>
        <dbReference type="ChEBI" id="CHEBI:36218"/>
        <dbReference type="ChEBI" id="CHEBI:143068"/>
        <dbReference type="EC" id="1.1.3.5"/>
    </reaction>
</comment>
<comment type="catalytic activity">
    <reaction evidence="3 6">
        <text>D-maltose + O2 = D-maltobiono-1,5-lactone + H2O2</text>
        <dbReference type="Rhea" id="RHEA:59344"/>
        <dbReference type="ChEBI" id="CHEBI:15379"/>
        <dbReference type="ChEBI" id="CHEBI:16240"/>
        <dbReference type="ChEBI" id="CHEBI:17306"/>
        <dbReference type="ChEBI" id="CHEBI:143029"/>
        <dbReference type="EC" id="1.1.3.5"/>
    </reaction>
</comment>
<comment type="catalytic activity">
    <reaction evidence="3">
        <text>D-xylose + O2 = D-xylono-1,5-lactone + H2O2</text>
        <dbReference type="Rhea" id="RHEA:59324"/>
        <dbReference type="ChEBI" id="CHEBI:15379"/>
        <dbReference type="ChEBI" id="CHEBI:15867"/>
        <dbReference type="ChEBI" id="CHEBI:16240"/>
        <dbReference type="ChEBI" id="CHEBI:53455"/>
    </reaction>
</comment>
<comment type="cofactor">
    <cofactor evidence="4">
        <name>FAD</name>
        <dbReference type="ChEBI" id="CHEBI:57692"/>
    </cofactor>
    <text evidence="7">Binds 1 FAD per subunit in a bicovalent manner.</text>
</comment>
<comment type="biophysicochemical properties">
    <kinetics>
        <KM evidence="4">0.97 mM for oxygen</KM>
        <KM evidence="3">19 mM for cellobiose (at pH 6 and 30 degrees Celsius)</KM>
        <KM evidence="3">59 mM for cellobiose (at pH 6 and 40 degrees Celsius)</KM>
        <KM evidence="6">51 uM for cellobiose (at pH 7.2 and 25 degrees Celsius)</KM>
        <KM evidence="6">59 uM for cellotriose (at pH 7.2 and 25 degrees Celsius)</KM>
        <KM evidence="6">66 uM for cellotetraose (at pH 7.2 and 25 degrees Celsius)</KM>
        <KM evidence="3">42 mM for glucose (at pH 6 and 40 degrees Celsius)</KM>
        <KM evidence="3">11 mM for maltose (at pH 6 and 40 degrees Celsius)</KM>
        <KM evidence="6">12 mM for maltose (at pH 7.2 and 25 degrees Celsius)</KM>
    </kinetics>
    <phDependence>
        <text evidence="3">Optimum pH is 5-7.</text>
    </phDependence>
    <temperatureDependence>
        <text evidence="3">Optimum temperature is 50 degrees Celsius.</text>
    </temperatureDependence>
</comment>
<comment type="subcellular location">
    <subcellularLocation>
        <location evidence="3">Secreted</location>
    </subcellularLocation>
</comment>
<comment type="PTM">
    <text evidence="7">The FAD cofactor is bound via a bicovalent 6-S-cysteinyl, 8alpha-N1-histidyl FAD linkage.</text>
</comment>
<comment type="similarity">
    <text evidence="10">Belongs to the oxygen-dependent FAD-linked oxidoreductase family.</text>
</comment>
<feature type="signal peptide" evidence="3">
    <location>
        <begin position="1"/>
        <end position="22"/>
    </location>
</feature>
<feature type="chain" id="PRO_0000446664" description="Carbohydrate oxidase">
    <location>
        <begin position="23"/>
        <end position="495"/>
    </location>
</feature>
<feature type="domain" description="FAD-binding PCMH-type" evidence="2">
    <location>
        <begin position="55"/>
        <end position="229"/>
    </location>
</feature>
<feature type="glycosylation site" description="N-linked (GlcNAc...) asparagine" evidence="11 12">
    <location>
        <position position="244"/>
    </location>
</feature>
<feature type="glycosylation site" description="N-linked (GlcNAc...) asparagine" evidence="1">
    <location>
        <position position="417"/>
    </location>
</feature>
<feature type="cross-link" description="6-(S-cysteinyl)-8alpha-(pros-histidyl)-FAD (His-Cys)" evidence="7">
    <location>
        <begin position="92"/>
        <end position="154"/>
    </location>
</feature>
<feature type="helix" evidence="13">
    <location>
        <begin position="24"/>
        <end position="31"/>
    </location>
</feature>
<feature type="helix" evidence="13">
    <location>
        <begin position="42"/>
        <end position="47"/>
    </location>
</feature>
<feature type="strand" evidence="13">
    <location>
        <begin position="60"/>
        <end position="64"/>
    </location>
</feature>
<feature type="helix" evidence="13">
    <location>
        <begin position="68"/>
        <end position="80"/>
    </location>
</feature>
<feature type="strand" evidence="13">
    <location>
        <begin position="85"/>
        <end position="90"/>
    </location>
</feature>
<feature type="helix" evidence="13">
    <location>
        <begin position="97"/>
        <end position="99"/>
    </location>
</feature>
<feature type="strand" evidence="13">
    <location>
        <begin position="101"/>
        <end position="104"/>
    </location>
</feature>
<feature type="strand" evidence="13">
    <location>
        <begin position="106"/>
        <end position="109"/>
    </location>
</feature>
<feature type="strand" evidence="13">
    <location>
        <begin position="116"/>
        <end position="120"/>
    </location>
</feature>
<feature type="turn" evidence="13">
    <location>
        <begin position="121"/>
        <end position="124"/>
    </location>
</feature>
<feature type="strand" evidence="13">
    <location>
        <begin position="125"/>
        <end position="128"/>
    </location>
</feature>
<feature type="helix" evidence="13">
    <location>
        <begin position="134"/>
        <end position="145"/>
    </location>
</feature>
<feature type="strand" evidence="13">
    <location>
        <begin position="146"/>
        <end position="148"/>
    </location>
</feature>
<feature type="helix" evidence="13">
    <location>
        <begin position="159"/>
        <end position="164"/>
    </location>
</feature>
<feature type="helix" evidence="13">
    <location>
        <begin position="172"/>
        <end position="175"/>
    </location>
</feature>
<feature type="helix" evidence="13">
    <location>
        <begin position="178"/>
        <end position="181"/>
    </location>
</feature>
<feature type="strand" evidence="13">
    <location>
        <begin position="182"/>
        <end position="188"/>
    </location>
</feature>
<feature type="strand" evidence="13">
    <location>
        <begin position="194"/>
        <end position="198"/>
    </location>
</feature>
<feature type="helix" evidence="13">
    <location>
        <begin position="203"/>
        <end position="212"/>
    </location>
</feature>
<feature type="helix" evidence="13">
    <location>
        <begin position="213"/>
        <end position="215"/>
    </location>
</feature>
<feature type="strand" evidence="13">
    <location>
        <begin position="218"/>
        <end position="225"/>
    </location>
</feature>
<feature type="strand" evidence="13">
    <location>
        <begin position="233"/>
        <end position="239"/>
    </location>
</feature>
<feature type="helix" evidence="13">
    <location>
        <begin position="245"/>
        <end position="261"/>
    </location>
</feature>
<feature type="strand" evidence="13">
    <location>
        <begin position="267"/>
        <end position="277"/>
    </location>
</feature>
<feature type="strand" evidence="13">
    <location>
        <begin position="280"/>
        <end position="287"/>
    </location>
</feature>
<feature type="helix" evidence="13">
    <location>
        <begin position="289"/>
        <end position="300"/>
    </location>
</feature>
<feature type="strand" evidence="13">
    <location>
        <begin position="313"/>
        <end position="315"/>
    </location>
</feature>
<feature type="helix" evidence="13">
    <location>
        <begin position="317"/>
        <end position="323"/>
    </location>
</feature>
<feature type="strand" evidence="13">
    <location>
        <begin position="325"/>
        <end position="328"/>
    </location>
</feature>
<feature type="strand" evidence="13">
    <location>
        <begin position="339"/>
        <end position="349"/>
    </location>
</feature>
<feature type="helix" evidence="13">
    <location>
        <begin position="354"/>
        <end position="365"/>
    </location>
</feature>
<feature type="helix" evidence="13">
    <location>
        <begin position="367"/>
        <end position="369"/>
    </location>
</feature>
<feature type="strand" evidence="13">
    <location>
        <begin position="372"/>
        <end position="381"/>
    </location>
</feature>
<feature type="helix" evidence="13">
    <location>
        <begin position="388"/>
        <end position="391"/>
    </location>
</feature>
<feature type="turn" evidence="13">
    <location>
        <begin position="394"/>
        <end position="396"/>
    </location>
</feature>
<feature type="strand" evidence="13">
    <location>
        <begin position="405"/>
        <end position="414"/>
    </location>
</feature>
<feature type="turn" evidence="13">
    <location>
        <begin position="422"/>
        <end position="424"/>
    </location>
</feature>
<feature type="helix" evidence="13">
    <location>
        <begin position="425"/>
        <end position="436"/>
    </location>
</feature>
<feature type="helix" evidence="13">
    <location>
        <begin position="441"/>
        <end position="443"/>
    </location>
</feature>
<feature type="helix" evidence="13">
    <location>
        <begin position="448"/>
        <end position="450"/>
    </location>
</feature>
<feature type="helix" evidence="13">
    <location>
        <begin position="457"/>
        <end position="465"/>
    </location>
</feature>
<feature type="helix" evidence="13">
    <location>
        <begin position="466"/>
        <end position="468"/>
    </location>
</feature>
<feature type="helix" evidence="13">
    <location>
        <begin position="469"/>
        <end position="479"/>
    </location>
</feature>